<sequence>MPLNRTLSMSSLPGLEDWEDEFDLENTVLFEVAWEVANKVGGIYTVLQTKAKVTGDEWGDNYYLVGPYTEQGVRTQVELLEPPTPALKRTLDSMNSKGCKVYFGRWLIEGGPLVVLLDVGASAWALERWKGELWDTCNIGVPWYDREANDAVLFGFLTTWFLGEFLAQSEEKPHVVAHFHEWLAGVGLCLCRARRLPVATIFTTHATLLGRYLCAGAVDFYNNLENFNVDKEAGERQIYHRYCMERAAAHCAHVFTTVSQITAIEAQHLLKRKPDIVTPNGLNVKKFSAMHEFQNLHAQSKARIQEFVRGHFYGHLDFNLDKTLYFFIAGRYEFSNKGADVFLEALARLNYLLRVNGSEQTVVAFFIMPARTNNFNVETLKGQAVRKQLWDTANTVKEKFGRKLYESLLVGSLPDMNKMLDKEDFTMMKRAIFATQRQSFPPVCTHNMLDDSSDPILTTIRRIGLFNSSADRVKVIFHPEFLSSTSPLLPVDYEEFVRGCHLGVFPSYYEPWGYTPAECTVMGIPSVSTNLSGFGCFMEEHIADPSAYGIYILDRRFRSLDDSCSQLTSFLYSFCQQSRRQRIIQRNRTERLSDLLDWKYLGRYYMSARHMALAKAFPEYFTYEPHEADATQGYRYPRPASVPPSPSLSRHSSPHQSEDEEEPRDLPPDEDDERYDEDEEAAKDRRNIRAPEWPRRASCTSSTGSKRGSVDTAPSSSVSTPSEPLSPASSLGEERN</sequence>
<name>GYS1_BOVIN</name>
<comment type="function">
    <text evidence="3">Glycogen synthase participates in the glycogen biosynthetic process along with glycogenin and glycogen branching enzyme. Extends the primer composed of a few glucose units formed by glycogenin by adding new glucose units to it. In this context, glycogen synthase transfers the glycosyl residue from UDP-Glc to the non-reducing end of alpha-1,4-glucan.</text>
</comment>
<comment type="catalytic activity">
    <reaction evidence="3">
        <text>[(1-&gt;4)-alpha-D-glucosyl](n) + UDP-alpha-D-glucose = [(1-&gt;4)-alpha-D-glucosyl](n+1) + UDP + H(+)</text>
        <dbReference type="Rhea" id="RHEA:18549"/>
        <dbReference type="Rhea" id="RHEA-COMP:9584"/>
        <dbReference type="Rhea" id="RHEA-COMP:9587"/>
        <dbReference type="ChEBI" id="CHEBI:15378"/>
        <dbReference type="ChEBI" id="CHEBI:15444"/>
        <dbReference type="ChEBI" id="CHEBI:58223"/>
        <dbReference type="ChEBI" id="CHEBI:58885"/>
        <dbReference type="EC" id="2.4.1.11"/>
    </reaction>
    <physiologicalReaction direction="left-to-right" evidence="3">
        <dbReference type="Rhea" id="RHEA:18550"/>
    </physiologicalReaction>
</comment>
<comment type="activity regulation">
    <text evidence="4 5">Allosteric activation by glucose-6-phosphate. Phosphorylation reduces the activity towards UDP-glucose. When in the non-phosphorylated state, glycogen synthase does not require glucose-6-phosphate as an allosteric activator; when phosphorylated it does (By similarity).</text>
</comment>
<comment type="pathway">
    <text evidence="3">Glycan biosynthesis; glycogen biosynthesis.</text>
</comment>
<comment type="subunit">
    <text evidence="3">Part of the GYS1-GYG1 complex, a heterooctamer composed of a tetramer of GYS1 and 2 dimers of GYG1, where each GYS1 protomer binds to one GYG1 subunit (via GYG1 C-terminus); the GYS1 tetramer may dissociate from GYG1 dimers to continue glycogen polymerization on its own.</text>
</comment>
<comment type="PTM">
    <text evidence="1">Phosphorylation at Ser-8 by AMPK inactivates the enzyme activity. Primed phosphorylation at Ser-657 (site 5) by CSNK2A1 and CSNK2A2 is required for inhibitory phosphorylation at Ser-641 (site 3a), Ser-645 (site 3b), Ser-649 (site 3c) and Ser-653 (site 4) by GSK3A an GSK3B. Phosphorylated at Ser-641 by PASK, leading to inactivation; phosphorylation by PASK is inhibited by glycogen. Phosphorylated at Ser-641 by DYRK2, leading to inactivation. Dephosphorylation at Ser-641 and Ser-645 by PP1 activates the enzyme (By similarity).</text>
</comment>
<comment type="similarity">
    <text evidence="8">Belongs to the glycosyltransferase 3 family.</text>
</comment>
<organism>
    <name type="scientific">Bos taurus</name>
    <name type="common">Bovine</name>
    <dbReference type="NCBI Taxonomy" id="9913"/>
    <lineage>
        <taxon>Eukaryota</taxon>
        <taxon>Metazoa</taxon>
        <taxon>Chordata</taxon>
        <taxon>Craniata</taxon>
        <taxon>Vertebrata</taxon>
        <taxon>Euteleostomi</taxon>
        <taxon>Mammalia</taxon>
        <taxon>Eutheria</taxon>
        <taxon>Laurasiatheria</taxon>
        <taxon>Artiodactyla</taxon>
        <taxon>Ruminantia</taxon>
        <taxon>Pecora</taxon>
        <taxon>Bovidae</taxon>
        <taxon>Bovinae</taxon>
        <taxon>Bos</taxon>
    </lineage>
</organism>
<accession>A7MB78</accession>
<evidence type="ECO:0000250" key="1"/>
<evidence type="ECO:0000250" key="2">
    <source>
        <dbReference type="UniProtKB" id="A2RRU1"/>
    </source>
</evidence>
<evidence type="ECO:0000250" key="3">
    <source>
        <dbReference type="UniProtKB" id="P13807"/>
    </source>
</evidence>
<evidence type="ECO:0000250" key="4">
    <source>
        <dbReference type="UniProtKB" id="P13834"/>
    </source>
</evidence>
<evidence type="ECO:0000250" key="5">
    <source>
        <dbReference type="UniProtKB" id="P54840"/>
    </source>
</evidence>
<evidence type="ECO:0000250" key="6">
    <source>
        <dbReference type="UniProtKB" id="Q9Z1E4"/>
    </source>
</evidence>
<evidence type="ECO:0000256" key="7">
    <source>
        <dbReference type="SAM" id="MobiDB-lite"/>
    </source>
</evidence>
<evidence type="ECO:0000305" key="8"/>
<proteinExistence type="evidence at transcript level"/>
<protein>
    <recommendedName>
        <fullName>Glycogen [starch] synthase, muscle</fullName>
        <ecNumber evidence="3">2.4.1.11</ecNumber>
    </recommendedName>
    <alternativeName>
        <fullName evidence="3">Glycogen synthase 1</fullName>
    </alternativeName>
</protein>
<gene>
    <name type="primary">GYS1</name>
</gene>
<reference key="1">
    <citation type="submission" date="2007-07" db="EMBL/GenBank/DDBJ databases">
        <authorList>
            <consortium name="NIH - Mammalian Gene Collection (MGC) project"/>
        </authorList>
    </citation>
    <scope>NUCLEOTIDE SEQUENCE [LARGE SCALE MRNA]</scope>
    <source>
        <strain>Hereford</strain>
        <tissue>Fetal muscle</tissue>
    </source>
</reference>
<dbReference type="EC" id="2.4.1.11" evidence="3"/>
<dbReference type="EMBL" id="BC151381">
    <property type="protein sequence ID" value="AAI51382.1"/>
    <property type="molecule type" value="mRNA"/>
</dbReference>
<dbReference type="RefSeq" id="NP_001094769.1">
    <property type="nucleotide sequence ID" value="NM_001101299.2"/>
</dbReference>
<dbReference type="SMR" id="A7MB78"/>
<dbReference type="FunCoup" id="A7MB78">
    <property type="interactions" value="1607"/>
</dbReference>
<dbReference type="STRING" id="9913.ENSBTAP00000007423"/>
<dbReference type="CAZy" id="GT3">
    <property type="family name" value="Glycosyltransferase Family 3"/>
</dbReference>
<dbReference type="iPTMnet" id="A7MB78"/>
<dbReference type="PaxDb" id="9913-ENSBTAP00000007423"/>
<dbReference type="GeneID" id="786335"/>
<dbReference type="KEGG" id="bta:786335"/>
<dbReference type="CTD" id="2997"/>
<dbReference type="VEuPathDB" id="HostDB:ENSBTAG00000039958"/>
<dbReference type="eggNOG" id="KOG3742">
    <property type="taxonomic scope" value="Eukaryota"/>
</dbReference>
<dbReference type="HOGENOM" id="CLU_015910_1_0_1"/>
<dbReference type="InParanoid" id="A7MB78"/>
<dbReference type="OMA" id="RDVRNHI"/>
<dbReference type="OrthoDB" id="6335297at2759"/>
<dbReference type="TreeFam" id="TF300306"/>
<dbReference type="Reactome" id="R-BTA-3322077">
    <property type="pathway name" value="Glycogen synthesis"/>
</dbReference>
<dbReference type="UniPathway" id="UPA00164"/>
<dbReference type="Proteomes" id="UP000009136">
    <property type="component" value="Chromosome 18"/>
</dbReference>
<dbReference type="Bgee" id="ENSBTAG00000039958">
    <property type="expression patterns" value="Expressed in infraspinatus muscle and 104 other cell types or tissues"/>
</dbReference>
<dbReference type="GO" id="GO:0005737">
    <property type="term" value="C:cytoplasm"/>
    <property type="evidence" value="ECO:0000318"/>
    <property type="project" value="GO_Central"/>
</dbReference>
<dbReference type="GO" id="GO:0004373">
    <property type="term" value="F:alpha-1,4-glucan glucosyltransferase (UDP-glucose donor) activity"/>
    <property type="evidence" value="ECO:0000250"/>
    <property type="project" value="UniProtKB"/>
</dbReference>
<dbReference type="GO" id="GO:0005978">
    <property type="term" value="P:glycogen biosynthetic process"/>
    <property type="evidence" value="ECO:0000250"/>
    <property type="project" value="UniProtKB"/>
</dbReference>
<dbReference type="CDD" id="cd03793">
    <property type="entry name" value="GT3_GSY2-like"/>
    <property type="match status" value="1"/>
</dbReference>
<dbReference type="FunFam" id="3.40.50.2000:FF:000014">
    <property type="entry name" value="Glycogen [starch] synthase"/>
    <property type="match status" value="1"/>
</dbReference>
<dbReference type="FunFam" id="3.40.50.2000:FF:000028">
    <property type="entry name" value="Glycogen [starch] synthase"/>
    <property type="match status" value="1"/>
</dbReference>
<dbReference type="Gene3D" id="3.40.50.2000">
    <property type="entry name" value="Glycogen Phosphorylase B"/>
    <property type="match status" value="2"/>
</dbReference>
<dbReference type="InterPro" id="IPR008631">
    <property type="entry name" value="Glycogen_synth"/>
</dbReference>
<dbReference type="PANTHER" id="PTHR10176:SF2">
    <property type="entry name" value="GLYCOGEN [STARCH] SYNTHASE, MUSCLE"/>
    <property type="match status" value="1"/>
</dbReference>
<dbReference type="PANTHER" id="PTHR10176">
    <property type="entry name" value="GLYCOGEN SYNTHASE"/>
    <property type="match status" value="1"/>
</dbReference>
<dbReference type="Pfam" id="PF05693">
    <property type="entry name" value="Glycogen_syn"/>
    <property type="match status" value="1"/>
</dbReference>
<dbReference type="SUPFAM" id="SSF53756">
    <property type="entry name" value="UDP-Glycosyltransferase/glycogen phosphorylase"/>
    <property type="match status" value="2"/>
</dbReference>
<keyword id="KW-0021">Allosteric enzyme</keyword>
<keyword id="KW-0320">Glycogen biosynthesis</keyword>
<keyword id="KW-0328">Glycosyltransferase</keyword>
<keyword id="KW-0597">Phosphoprotein</keyword>
<keyword id="KW-1185">Reference proteome</keyword>
<keyword id="KW-0808">Transferase</keyword>
<feature type="chain" id="PRO_0000358311" description="Glycogen [starch] synthase, muscle">
    <location>
        <begin position="1"/>
        <end position="736"/>
    </location>
</feature>
<feature type="region of interest" description="Disordered" evidence="7">
    <location>
        <begin position="631"/>
        <end position="736"/>
    </location>
</feature>
<feature type="compositionally biased region" description="Acidic residues" evidence="7">
    <location>
        <begin position="658"/>
        <end position="681"/>
    </location>
</feature>
<feature type="compositionally biased region" description="Basic and acidic residues" evidence="7">
    <location>
        <begin position="682"/>
        <end position="695"/>
    </location>
</feature>
<feature type="compositionally biased region" description="Low complexity" evidence="7">
    <location>
        <begin position="714"/>
        <end position="727"/>
    </location>
</feature>
<feature type="binding site" evidence="3">
    <location>
        <position position="39"/>
    </location>
    <ligand>
        <name>UDP</name>
        <dbReference type="ChEBI" id="CHEBI:58223"/>
    </ligand>
</feature>
<feature type="binding site" evidence="3">
    <location>
        <position position="205"/>
    </location>
    <ligand>
        <name>UDP-alpha-D-glucose</name>
        <dbReference type="ChEBI" id="CHEBI:58885"/>
    </ligand>
</feature>
<feature type="binding site" evidence="3">
    <location>
        <position position="211"/>
    </location>
    <ligand>
        <name>UDP-alpha-D-glucose</name>
        <dbReference type="ChEBI" id="CHEBI:58885"/>
    </ligand>
</feature>
<feature type="binding site" description="in other chain" evidence="3">
    <location>
        <position position="291"/>
    </location>
    <ligand>
        <name>alpha-D-glucose 6-phosphate</name>
        <dbReference type="ChEBI" id="CHEBI:58225"/>
        <note>allosteric activator; ligand shared between two neighboring subunits</note>
    </ligand>
</feature>
<feature type="binding site" description="in other chain" evidence="3">
    <location>
        <position position="292"/>
    </location>
    <ligand>
        <name>alpha-D-glucose 6-phosphate</name>
        <dbReference type="ChEBI" id="CHEBI:58225"/>
        <note>allosteric activator; ligand shared between two neighboring subunits</note>
    </ligand>
</feature>
<feature type="binding site" evidence="3">
    <location>
        <position position="294"/>
    </location>
    <ligand>
        <name>alpha-D-glucose 6-phosphate</name>
        <dbReference type="ChEBI" id="CHEBI:58225"/>
        <note>allosteric activator; ligand shared between two neighboring subunits</note>
    </ligand>
</feature>
<feature type="binding site" evidence="3">
    <location>
        <position position="297"/>
    </location>
    <ligand>
        <name>alpha-D-glucose 6-phosphate</name>
        <dbReference type="ChEBI" id="CHEBI:58225"/>
        <note>allosteric activator; ligand shared between two neighboring subunits</note>
    </ligand>
</feature>
<feature type="binding site" evidence="3">
    <location>
        <position position="301"/>
    </location>
    <ligand>
        <name>alpha-D-glucose 6-phosphate</name>
        <dbReference type="ChEBI" id="CHEBI:58225"/>
        <note>allosteric activator; ligand shared between two neighboring subunits</note>
    </ligand>
</feature>
<feature type="binding site" evidence="3">
    <location>
        <position position="331"/>
    </location>
    <ligand>
        <name>UDP</name>
        <dbReference type="ChEBI" id="CHEBI:58223"/>
    </ligand>
</feature>
<feature type="binding site" evidence="3">
    <location>
        <position position="331"/>
    </location>
    <ligand>
        <name>UDP-alpha-D-glucose</name>
        <dbReference type="ChEBI" id="CHEBI:58885"/>
    </ligand>
</feature>
<feature type="binding site" evidence="3">
    <location>
        <position position="501"/>
    </location>
    <ligand>
        <name>alpha-D-glucose 6-phosphate</name>
        <dbReference type="ChEBI" id="CHEBI:58225"/>
        <note>allosteric activator; ligand shared between two neighboring subunits</note>
    </ligand>
</feature>
<feature type="binding site" evidence="3">
    <location>
        <position position="510"/>
    </location>
    <ligand>
        <name>UDP-alpha-D-glucose</name>
        <dbReference type="ChEBI" id="CHEBI:58885"/>
    </ligand>
</feature>
<feature type="binding site" evidence="3">
    <location>
        <position position="512"/>
    </location>
    <ligand>
        <name>UDP-alpha-D-glucose</name>
        <dbReference type="ChEBI" id="CHEBI:58885"/>
    </ligand>
</feature>
<feature type="binding site" evidence="3">
    <location>
        <position position="513"/>
    </location>
    <ligand>
        <name>UDP-alpha-D-glucose</name>
        <dbReference type="ChEBI" id="CHEBI:58885"/>
    </ligand>
</feature>
<feature type="binding site" evidence="3">
    <location>
        <position position="515"/>
    </location>
    <ligand>
        <name>UDP</name>
        <dbReference type="ChEBI" id="CHEBI:58223"/>
    </ligand>
</feature>
<feature type="binding site" evidence="3">
    <location>
        <position position="582"/>
    </location>
    <ligand>
        <name>alpha-D-glucose 6-phosphate</name>
        <dbReference type="ChEBI" id="CHEBI:58225"/>
        <note>allosteric activator; ligand shared between two neighboring subunits</note>
    </ligand>
</feature>
<feature type="binding site" evidence="3">
    <location>
        <position position="586"/>
    </location>
    <ligand>
        <name>alpha-D-glucose 6-phosphate</name>
        <dbReference type="ChEBI" id="CHEBI:58225"/>
        <note>allosteric activator; ligand shared between two neighboring subunits</note>
    </ligand>
</feature>
<feature type="modified residue" description="Phosphoserine; by AMPK and PKA" evidence="6">
    <location>
        <position position="8"/>
    </location>
</feature>
<feature type="modified residue" description="Phosphoserine" evidence="4">
    <location>
        <position position="11"/>
    </location>
</feature>
<feature type="modified residue" description="Phosphoserine" evidence="3">
    <location>
        <position position="412"/>
    </location>
</feature>
<feature type="modified residue" description="Phosphoserine; by DYRK2, GSK3-alpha, GSK3-beta and PASK" evidence="4">
    <location>
        <position position="641"/>
    </location>
</feature>
<feature type="modified residue" description="Phosphoserine; by GSK3-alpha and GSK3-beta" evidence="4">
    <location>
        <position position="645"/>
    </location>
</feature>
<feature type="modified residue" description="Phosphoserine; by GSK3-alpha and GSK3-beta" evidence="4">
    <location>
        <position position="649"/>
    </location>
</feature>
<feature type="modified residue" description="Phosphoserine" evidence="2">
    <location>
        <position position="652"/>
    </location>
</feature>
<feature type="modified residue" description="Phosphoserine; by GSK3-alpha and GSK3-beta" evidence="4">
    <location>
        <position position="653"/>
    </location>
</feature>
<feature type="modified residue" description="Phosphoserine; by CK2" evidence="4">
    <location>
        <position position="657"/>
    </location>
</feature>
<feature type="modified residue" description="Phosphoserine" evidence="4">
    <location>
        <position position="698"/>
    </location>
</feature>
<feature type="modified residue" description="Phosphothreonine" evidence="3">
    <location>
        <position position="700"/>
    </location>
</feature>
<feature type="modified residue" description="Phosphoserine" evidence="3">
    <location>
        <position position="709"/>
    </location>
</feature>
<feature type="modified residue" description="Phosphothreonine" evidence="6">
    <location>
        <position position="720"/>
    </location>
</feature>
<feature type="modified residue" description="Phosphoserine" evidence="3">
    <location>
        <position position="726"/>
    </location>
</feature>
<feature type="modified residue" description="Phosphoserine" evidence="3">
    <location>
        <position position="730"/>
    </location>
</feature>